<comment type="function">
    <text evidence="1">Catalyzes the ATP-dependent conversion of 7-carboxy-7-deazaguanine (CDG) to 7-cyano-7-deazaguanine (preQ(0)).</text>
</comment>
<comment type="catalytic activity">
    <reaction evidence="1">
        <text>7-carboxy-7-deazaguanine + NH4(+) + ATP = 7-cyano-7-deazaguanine + ADP + phosphate + H2O + H(+)</text>
        <dbReference type="Rhea" id="RHEA:27982"/>
        <dbReference type="ChEBI" id="CHEBI:15377"/>
        <dbReference type="ChEBI" id="CHEBI:15378"/>
        <dbReference type="ChEBI" id="CHEBI:28938"/>
        <dbReference type="ChEBI" id="CHEBI:30616"/>
        <dbReference type="ChEBI" id="CHEBI:43474"/>
        <dbReference type="ChEBI" id="CHEBI:45075"/>
        <dbReference type="ChEBI" id="CHEBI:61036"/>
        <dbReference type="ChEBI" id="CHEBI:456216"/>
        <dbReference type="EC" id="6.3.4.20"/>
    </reaction>
</comment>
<comment type="cofactor">
    <cofactor evidence="1">
        <name>Zn(2+)</name>
        <dbReference type="ChEBI" id="CHEBI:29105"/>
    </cofactor>
    <text evidence="1">Binds 1 zinc ion per subunit.</text>
</comment>
<comment type="pathway">
    <text evidence="1">Purine metabolism; 7-cyano-7-deazaguanine biosynthesis.</text>
</comment>
<comment type="similarity">
    <text evidence="1">Belongs to the QueC family.</text>
</comment>
<organism>
    <name type="scientific">Salmonella enteritidis PT4 (strain P125109)</name>
    <dbReference type="NCBI Taxonomy" id="550537"/>
    <lineage>
        <taxon>Bacteria</taxon>
        <taxon>Pseudomonadati</taxon>
        <taxon>Pseudomonadota</taxon>
        <taxon>Gammaproteobacteria</taxon>
        <taxon>Enterobacterales</taxon>
        <taxon>Enterobacteriaceae</taxon>
        <taxon>Salmonella</taxon>
    </lineage>
</organism>
<keyword id="KW-0067">ATP-binding</keyword>
<keyword id="KW-0436">Ligase</keyword>
<keyword id="KW-0479">Metal-binding</keyword>
<keyword id="KW-0547">Nucleotide-binding</keyword>
<keyword id="KW-0671">Queuosine biosynthesis</keyword>
<keyword id="KW-0862">Zinc</keyword>
<evidence type="ECO:0000255" key="1">
    <source>
        <dbReference type="HAMAP-Rule" id="MF_01633"/>
    </source>
</evidence>
<protein>
    <recommendedName>
        <fullName evidence="1">7-cyano-7-deazaguanine synthase</fullName>
        <ecNumber evidence="1">6.3.4.20</ecNumber>
    </recommendedName>
    <alternativeName>
        <fullName evidence="1">7-cyano-7-carbaguanine synthase</fullName>
    </alternativeName>
    <alternativeName>
        <fullName evidence="1">PreQ(0) synthase</fullName>
    </alternativeName>
    <alternativeName>
        <fullName evidence="1">Queuosine biosynthesis protein QueC</fullName>
    </alternativeName>
</protein>
<feature type="chain" id="PRO_1000186629" description="7-cyano-7-deazaguanine synthase">
    <location>
        <begin position="1"/>
        <end position="231"/>
    </location>
</feature>
<feature type="binding site" evidence="1">
    <location>
        <begin position="8"/>
        <end position="18"/>
    </location>
    <ligand>
        <name>ATP</name>
        <dbReference type="ChEBI" id="CHEBI:30616"/>
    </ligand>
</feature>
<feature type="binding site" evidence="1">
    <location>
        <position position="188"/>
    </location>
    <ligand>
        <name>Zn(2+)</name>
        <dbReference type="ChEBI" id="CHEBI:29105"/>
    </ligand>
</feature>
<feature type="binding site" evidence="1">
    <location>
        <position position="197"/>
    </location>
    <ligand>
        <name>Zn(2+)</name>
        <dbReference type="ChEBI" id="CHEBI:29105"/>
    </ligand>
</feature>
<feature type="binding site" evidence="1">
    <location>
        <position position="200"/>
    </location>
    <ligand>
        <name>Zn(2+)</name>
        <dbReference type="ChEBI" id="CHEBI:29105"/>
    </ligand>
</feature>
<feature type="binding site" evidence="1">
    <location>
        <position position="203"/>
    </location>
    <ligand>
        <name>Zn(2+)</name>
        <dbReference type="ChEBI" id="CHEBI:29105"/>
    </ligand>
</feature>
<gene>
    <name evidence="1" type="primary">queC</name>
    <name type="ordered locus">SEN0437</name>
</gene>
<proteinExistence type="inferred from homology"/>
<dbReference type="EC" id="6.3.4.20" evidence="1"/>
<dbReference type="EMBL" id="AM933172">
    <property type="protein sequence ID" value="CAR32023.1"/>
    <property type="molecule type" value="Genomic_DNA"/>
</dbReference>
<dbReference type="RefSeq" id="WP_000817201.1">
    <property type="nucleotide sequence ID" value="NC_011294.1"/>
</dbReference>
<dbReference type="SMR" id="B5QU45"/>
<dbReference type="KEGG" id="set:SEN0437"/>
<dbReference type="HOGENOM" id="CLU_081854_0_0_6"/>
<dbReference type="UniPathway" id="UPA00391"/>
<dbReference type="Proteomes" id="UP000000613">
    <property type="component" value="Chromosome"/>
</dbReference>
<dbReference type="GO" id="GO:0005524">
    <property type="term" value="F:ATP binding"/>
    <property type="evidence" value="ECO:0007669"/>
    <property type="project" value="UniProtKB-UniRule"/>
</dbReference>
<dbReference type="GO" id="GO:0016879">
    <property type="term" value="F:ligase activity, forming carbon-nitrogen bonds"/>
    <property type="evidence" value="ECO:0007669"/>
    <property type="project" value="UniProtKB-UniRule"/>
</dbReference>
<dbReference type="GO" id="GO:0008270">
    <property type="term" value="F:zinc ion binding"/>
    <property type="evidence" value="ECO:0007669"/>
    <property type="project" value="UniProtKB-UniRule"/>
</dbReference>
<dbReference type="GO" id="GO:0008616">
    <property type="term" value="P:queuosine biosynthetic process"/>
    <property type="evidence" value="ECO:0007669"/>
    <property type="project" value="UniProtKB-UniRule"/>
</dbReference>
<dbReference type="CDD" id="cd01995">
    <property type="entry name" value="QueC-like"/>
    <property type="match status" value="1"/>
</dbReference>
<dbReference type="FunFam" id="3.40.50.620:FF:000017">
    <property type="entry name" value="7-cyano-7-deazaguanine synthase"/>
    <property type="match status" value="1"/>
</dbReference>
<dbReference type="Gene3D" id="3.40.50.620">
    <property type="entry name" value="HUPs"/>
    <property type="match status" value="1"/>
</dbReference>
<dbReference type="HAMAP" id="MF_01633">
    <property type="entry name" value="QueC"/>
    <property type="match status" value="1"/>
</dbReference>
<dbReference type="InterPro" id="IPR018317">
    <property type="entry name" value="QueC"/>
</dbReference>
<dbReference type="InterPro" id="IPR014729">
    <property type="entry name" value="Rossmann-like_a/b/a_fold"/>
</dbReference>
<dbReference type="NCBIfam" id="TIGR00364">
    <property type="entry name" value="7-cyano-7-deazaguanine synthase QueC"/>
    <property type="match status" value="1"/>
</dbReference>
<dbReference type="NCBIfam" id="NF008317">
    <property type="entry name" value="PRK11106.1"/>
    <property type="match status" value="1"/>
</dbReference>
<dbReference type="PANTHER" id="PTHR42914">
    <property type="entry name" value="7-CYANO-7-DEAZAGUANINE SYNTHASE"/>
    <property type="match status" value="1"/>
</dbReference>
<dbReference type="PANTHER" id="PTHR42914:SF1">
    <property type="entry name" value="7-CYANO-7-DEAZAGUANINE SYNTHASE"/>
    <property type="match status" value="1"/>
</dbReference>
<dbReference type="Pfam" id="PF06508">
    <property type="entry name" value="QueC"/>
    <property type="match status" value="1"/>
</dbReference>
<dbReference type="PIRSF" id="PIRSF006293">
    <property type="entry name" value="ExsB"/>
    <property type="match status" value="1"/>
</dbReference>
<dbReference type="SUPFAM" id="SSF52402">
    <property type="entry name" value="Adenine nucleotide alpha hydrolases-like"/>
    <property type="match status" value="1"/>
</dbReference>
<name>QUEC_SALEP</name>
<accession>B5QU45</accession>
<reference key="1">
    <citation type="journal article" date="2008" name="Genome Res.">
        <title>Comparative genome analysis of Salmonella enteritidis PT4 and Salmonella gallinarum 287/91 provides insights into evolutionary and host adaptation pathways.</title>
        <authorList>
            <person name="Thomson N.R."/>
            <person name="Clayton D.J."/>
            <person name="Windhorst D."/>
            <person name="Vernikos G."/>
            <person name="Davidson S."/>
            <person name="Churcher C."/>
            <person name="Quail M.A."/>
            <person name="Stevens M."/>
            <person name="Jones M.A."/>
            <person name="Watson M."/>
            <person name="Barron A."/>
            <person name="Layton A."/>
            <person name="Pickard D."/>
            <person name="Kingsley R.A."/>
            <person name="Bignell A."/>
            <person name="Clark L."/>
            <person name="Harris B."/>
            <person name="Ormond D."/>
            <person name="Abdellah Z."/>
            <person name="Brooks K."/>
            <person name="Cherevach I."/>
            <person name="Chillingworth T."/>
            <person name="Woodward J."/>
            <person name="Norberczak H."/>
            <person name="Lord A."/>
            <person name="Arrowsmith C."/>
            <person name="Jagels K."/>
            <person name="Moule S."/>
            <person name="Mungall K."/>
            <person name="Saunders M."/>
            <person name="Whitehead S."/>
            <person name="Chabalgoity J.A."/>
            <person name="Maskell D."/>
            <person name="Humphreys T."/>
            <person name="Roberts M."/>
            <person name="Barrow P.A."/>
            <person name="Dougan G."/>
            <person name="Parkhill J."/>
        </authorList>
    </citation>
    <scope>NUCLEOTIDE SEQUENCE [LARGE SCALE GENOMIC DNA]</scope>
    <source>
        <strain>P125109</strain>
    </source>
</reference>
<sequence length="231" mass="25455">MKRAVVVFSGGQDSTTCLAQARHQYDEVHCVTFDYGQRHRAEIDVARALALKLGARAHKVLDVTLLNELAVSSLTRDSIPVPDYEPNADGIPNTFVPGRNILFLTLAAIYAYQVKAEAVITGVCETDFSGYPDCRDEFVKALNHAVNLGMAKDIRFETPLMWIDKAETWALADYWGQLDLVREETLTCYNGIKGDGCGHCAACNLRANGLNHYLSNKAAVMAAMKQKTGLR</sequence>